<feature type="chain" id="PRO_0000396063" description="Probable F-box protein At4g22165">
    <location>
        <begin position="1"/>
        <end position="363"/>
    </location>
</feature>
<feature type="domain" description="F-box">
    <location>
        <begin position="7"/>
        <end position="56"/>
    </location>
</feature>
<protein>
    <recommendedName>
        <fullName>Probable F-box protein At4g22165</fullName>
    </recommendedName>
</protein>
<gene>
    <name type="ordered locus">At4g22165</name>
    <name type="ORF">T10I14</name>
</gene>
<keyword id="KW-1185">Reference proteome</keyword>
<reference key="1">
    <citation type="journal article" date="1999" name="Nature">
        <title>Sequence and analysis of chromosome 4 of the plant Arabidopsis thaliana.</title>
        <authorList>
            <person name="Mayer K.F.X."/>
            <person name="Schueller C."/>
            <person name="Wambutt R."/>
            <person name="Murphy G."/>
            <person name="Volckaert G."/>
            <person name="Pohl T."/>
            <person name="Duesterhoeft A."/>
            <person name="Stiekema W."/>
            <person name="Entian K.-D."/>
            <person name="Terryn N."/>
            <person name="Harris B."/>
            <person name="Ansorge W."/>
            <person name="Brandt P."/>
            <person name="Grivell L.A."/>
            <person name="Rieger M."/>
            <person name="Weichselgartner M."/>
            <person name="de Simone V."/>
            <person name="Obermaier B."/>
            <person name="Mache R."/>
            <person name="Mueller M."/>
            <person name="Kreis M."/>
            <person name="Delseny M."/>
            <person name="Puigdomenech P."/>
            <person name="Watson M."/>
            <person name="Schmidtheini T."/>
            <person name="Reichert B."/>
            <person name="Portetelle D."/>
            <person name="Perez-Alonso M."/>
            <person name="Boutry M."/>
            <person name="Bancroft I."/>
            <person name="Vos P."/>
            <person name="Hoheisel J."/>
            <person name="Zimmermann W."/>
            <person name="Wedler H."/>
            <person name="Ridley P."/>
            <person name="Langham S.-A."/>
            <person name="McCullagh B."/>
            <person name="Bilham L."/>
            <person name="Robben J."/>
            <person name="van der Schueren J."/>
            <person name="Grymonprez B."/>
            <person name="Chuang Y.-J."/>
            <person name="Vandenbussche F."/>
            <person name="Braeken M."/>
            <person name="Weltjens I."/>
            <person name="Voet M."/>
            <person name="Bastiaens I."/>
            <person name="Aert R."/>
            <person name="Defoor E."/>
            <person name="Weitzenegger T."/>
            <person name="Bothe G."/>
            <person name="Ramsperger U."/>
            <person name="Hilbert H."/>
            <person name="Braun M."/>
            <person name="Holzer E."/>
            <person name="Brandt A."/>
            <person name="Peters S."/>
            <person name="van Staveren M."/>
            <person name="Dirkse W."/>
            <person name="Mooijman P."/>
            <person name="Klein Lankhorst R."/>
            <person name="Rose M."/>
            <person name="Hauf J."/>
            <person name="Koetter P."/>
            <person name="Berneiser S."/>
            <person name="Hempel S."/>
            <person name="Feldpausch M."/>
            <person name="Lamberth S."/>
            <person name="Van den Daele H."/>
            <person name="De Keyser A."/>
            <person name="Buysshaert C."/>
            <person name="Gielen J."/>
            <person name="Villarroel R."/>
            <person name="De Clercq R."/>
            <person name="van Montagu M."/>
            <person name="Rogers J."/>
            <person name="Cronin A."/>
            <person name="Quail M.A."/>
            <person name="Bray-Allen S."/>
            <person name="Clark L."/>
            <person name="Doggett J."/>
            <person name="Hall S."/>
            <person name="Kay M."/>
            <person name="Lennard N."/>
            <person name="McLay K."/>
            <person name="Mayes R."/>
            <person name="Pettett A."/>
            <person name="Rajandream M.A."/>
            <person name="Lyne M."/>
            <person name="Benes V."/>
            <person name="Rechmann S."/>
            <person name="Borkova D."/>
            <person name="Bloecker H."/>
            <person name="Scharfe M."/>
            <person name="Grimm M."/>
            <person name="Loehnert T.-H."/>
            <person name="Dose S."/>
            <person name="de Haan M."/>
            <person name="Maarse A.C."/>
            <person name="Schaefer M."/>
            <person name="Mueller-Auer S."/>
            <person name="Gabel C."/>
            <person name="Fuchs M."/>
            <person name="Fartmann B."/>
            <person name="Granderath K."/>
            <person name="Dauner D."/>
            <person name="Herzl A."/>
            <person name="Neumann S."/>
            <person name="Argiriou A."/>
            <person name="Vitale D."/>
            <person name="Liguori R."/>
            <person name="Piravandi E."/>
            <person name="Massenet O."/>
            <person name="Quigley F."/>
            <person name="Clabauld G."/>
            <person name="Muendlein A."/>
            <person name="Felber R."/>
            <person name="Schnabl S."/>
            <person name="Hiller R."/>
            <person name="Schmidt W."/>
            <person name="Lecharny A."/>
            <person name="Aubourg S."/>
            <person name="Chefdor F."/>
            <person name="Cooke R."/>
            <person name="Berger C."/>
            <person name="Monfort A."/>
            <person name="Casacuberta E."/>
            <person name="Gibbons T."/>
            <person name="Weber N."/>
            <person name="Vandenbol M."/>
            <person name="Bargues M."/>
            <person name="Terol J."/>
            <person name="Torres A."/>
            <person name="Perez-Perez A."/>
            <person name="Purnelle B."/>
            <person name="Bent E."/>
            <person name="Johnson S."/>
            <person name="Tacon D."/>
            <person name="Jesse T."/>
            <person name="Heijnen L."/>
            <person name="Schwarz S."/>
            <person name="Scholler P."/>
            <person name="Heber S."/>
            <person name="Francs P."/>
            <person name="Bielke C."/>
            <person name="Frishman D."/>
            <person name="Haase D."/>
            <person name="Lemcke K."/>
            <person name="Mewes H.-W."/>
            <person name="Stocker S."/>
            <person name="Zaccaria P."/>
            <person name="Bevan M."/>
            <person name="Wilson R.K."/>
            <person name="de la Bastide M."/>
            <person name="Habermann K."/>
            <person name="Parnell L."/>
            <person name="Dedhia N."/>
            <person name="Gnoj L."/>
            <person name="Schutz K."/>
            <person name="Huang E."/>
            <person name="Spiegel L."/>
            <person name="Sekhon M."/>
            <person name="Murray J."/>
            <person name="Sheet P."/>
            <person name="Cordes M."/>
            <person name="Abu-Threideh J."/>
            <person name="Stoneking T."/>
            <person name="Kalicki J."/>
            <person name="Graves T."/>
            <person name="Harmon G."/>
            <person name="Edwards J."/>
            <person name="Latreille P."/>
            <person name="Courtney L."/>
            <person name="Cloud J."/>
            <person name="Abbott A."/>
            <person name="Scott K."/>
            <person name="Johnson D."/>
            <person name="Minx P."/>
            <person name="Bentley D."/>
            <person name="Fulton B."/>
            <person name="Miller N."/>
            <person name="Greco T."/>
            <person name="Kemp K."/>
            <person name="Kramer J."/>
            <person name="Fulton L."/>
            <person name="Mardis E."/>
            <person name="Dante M."/>
            <person name="Pepin K."/>
            <person name="Hillier L.W."/>
            <person name="Nelson J."/>
            <person name="Spieth J."/>
            <person name="Ryan E."/>
            <person name="Andrews S."/>
            <person name="Geisel C."/>
            <person name="Layman D."/>
            <person name="Du H."/>
            <person name="Ali J."/>
            <person name="Berghoff A."/>
            <person name="Jones K."/>
            <person name="Drone K."/>
            <person name="Cotton M."/>
            <person name="Joshu C."/>
            <person name="Antonoiu B."/>
            <person name="Zidanic M."/>
            <person name="Strong C."/>
            <person name="Sun H."/>
            <person name="Lamar B."/>
            <person name="Yordan C."/>
            <person name="Ma P."/>
            <person name="Zhong J."/>
            <person name="Preston R."/>
            <person name="Vil D."/>
            <person name="Shekher M."/>
            <person name="Matero A."/>
            <person name="Shah R."/>
            <person name="Swaby I.K."/>
            <person name="O'Shaughnessy A."/>
            <person name="Rodriguez M."/>
            <person name="Hoffman J."/>
            <person name="Till S."/>
            <person name="Granat S."/>
            <person name="Shohdy N."/>
            <person name="Hasegawa A."/>
            <person name="Hameed A."/>
            <person name="Lodhi M."/>
            <person name="Johnson A."/>
            <person name="Chen E."/>
            <person name="Marra M.A."/>
            <person name="Martienssen R."/>
            <person name="McCombie W.R."/>
        </authorList>
    </citation>
    <scope>NUCLEOTIDE SEQUENCE [LARGE SCALE GENOMIC DNA]</scope>
    <source>
        <strain>cv. Columbia</strain>
    </source>
</reference>
<reference key="2">
    <citation type="journal article" date="2017" name="Plant J.">
        <title>Araport11: a complete reannotation of the Arabidopsis thaliana reference genome.</title>
        <authorList>
            <person name="Cheng C.Y."/>
            <person name="Krishnakumar V."/>
            <person name="Chan A.P."/>
            <person name="Thibaud-Nissen F."/>
            <person name="Schobel S."/>
            <person name="Town C.D."/>
        </authorList>
    </citation>
    <scope>GENOME REANNOTATION</scope>
    <source>
        <strain>cv. Columbia</strain>
    </source>
</reference>
<evidence type="ECO:0000305" key="1"/>
<organism>
    <name type="scientific">Arabidopsis thaliana</name>
    <name type="common">Mouse-ear cress</name>
    <dbReference type="NCBI Taxonomy" id="3702"/>
    <lineage>
        <taxon>Eukaryota</taxon>
        <taxon>Viridiplantae</taxon>
        <taxon>Streptophyta</taxon>
        <taxon>Embryophyta</taxon>
        <taxon>Tracheophyta</taxon>
        <taxon>Spermatophyta</taxon>
        <taxon>Magnoliopsida</taxon>
        <taxon>eudicotyledons</taxon>
        <taxon>Gunneridae</taxon>
        <taxon>Pentapetalae</taxon>
        <taxon>rosids</taxon>
        <taxon>malvids</taxon>
        <taxon>Brassicales</taxon>
        <taxon>Brassicaceae</taxon>
        <taxon>Camelineae</taxon>
        <taxon>Arabidopsis</taxon>
    </lineage>
</organism>
<comment type="sequence caution" evidence="1">
    <conflict type="erroneous gene model prediction">
        <sequence resource="EMBL-CDS" id="CAB52872"/>
    </conflict>
    <text>The predicted gene At4g22165 has been split into 2 genes: At4g22160 and At4g22165.</text>
</comment>
<comment type="sequence caution" evidence="1">
    <conflict type="erroneous gene model prediction">
        <sequence resource="EMBL-CDS" id="CAB79171"/>
    </conflict>
    <text>The predicted gene At4g22165 has been split into 2 genes: At4g22160 and At4g22165.</text>
</comment>
<accession>P0CG94</accession>
<accession>Q9SUG5</accession>
<name>FB347_ARATH</name>
<dbReference type="EMBL" id="AL021712">
    <property type="protein sequence ID" value="CAB52872.1"/>
    <property type="status" value="ALT_SEQ"/>
    <property type="molecule type" value="Genomic_DNA"/>
</dbReference>
<dbReference type="EMBL" id="AL161556">
    <property type="protein sequence ID" value="CAB79171.1"/>
    <property type="status" value="ALT_SEQ"/>
    <property type="molecule type" value="Genomic_DNA"/>
</dbReference>
<dbReference type="EMBL" id="CP002687">
    <property type="protein sequence ID" value="AEE84567.1"/>
    <property type="molecule type" value="Genomic_DNA"/>
</dbReference>
<dbReference type="PIR" id="E85253">
    <property type="entry name" value="E85253"/>
</dbReference>
<dbReference type="RefSeq" id="NP_567647.1">
    <property type="nucleotide sequence ID" value="NM_118338.1"/>
</dbReference>
<dbReference type="PaxDb" id="3702-AT4G22165.1"/>
<dbReference type="EnsemblPlants" id="AT4G22165.1">
    <property type="protein sequence ID" value="AT4G22165.1"/>
    <property type="gene ID" value="AT4G22165"/>
</dbReference>
<dbReference type="GeneID" id="828306"/>
<dbReference type="Gramene" id="AT4G22165.1">
    <property type="protein sequence ID" value="AT4G22165.1"/>
    <property type="gene ID" value="AT4G22165"/>
</dbReference>
<dbReference type="KEGG" id="ath:AT4G22165"/>
<dbReference type="Araport" id="AT4G22165"/>
<dbReference type="TAIR" id="AT4G22165">
    <property type="gene designation" value="ATFDB30"/>
</dbReference>
<dbReference type="HOGENOM" id="CLU_019286_7_1_1"/>
<dbReference type="InParanoid" id="P0CG94"/>
<dbReference type="OMA" id="KNNHIPW"/>
<dbReference type="PhylomeDB" id="P0CG94"/>
<dbReference type="PRO" id="PR:P0CG94"/>
<dbReference type="Proteomes" id="UP000006548">
    <property type="component" value="Chromosome 4"/>
</dbReference>
<dbReference type="ExpressionAtlas" id="P0CG94">
    <property type="expression patterns" value="differential"/>
</dbReference>
<dbReference type="InterPro" id="IPR050942">
    <property type="entry name" value="F-box_BR-signaling"/>
</dbReference>
<dbReference type="InterPro" id="IPR001810">
    <property type="entry name" value="F-box_dom"/>
</dbReference>
<dbReference type="InterPro" id="IPR005174">
    <property type="entry name" value="KIB1-4_b-propeller"/>
</dbReference>
<dbReference type="PANTHER" id="PTHR44259:SF26">
    <property type="entry name" value="F-BOX FAMILY PROTEIN-LIKE PROTEIN"/>
    <property type="match status" value="1"/>
</dbReference>
<dbReference type="PANTHER" id="PTHR44259">
    <property type="entry name" value="OS07G0183000 PROTEIN-RELATED"/>
    <property type="match status" value="1"/>
</dbReference>
<dbReference type="Pfam" id="PF03478">
    <property type="entry name" value="Beta-prop_KIB1-4"/>
    <property type="match status" value="1"/>
</dbReference>
<dbReference type="Pfam" id="PF00646">
    <property type="entry name" value="F-box"/>
    <property type="match status" value="1"/>
</dbReference>
<dbReference type="SMART" id="SM00256">
    <property type="entry name" value="FBOX"/>
    <property type="match status" value="1"/>
</dbReference>
<sequence>MEKNHNPNTWSELPLDLLNLVFKRLSLVNFQRAKSVCSTRYSVSRQCVPERQIALLILFPKEDNTDNSTCKLFNPDEKDKLYKMQDLGVEFAKSVCRATYGSWLLMQDSKYHLYILNIFTRKRINLPPVESQLGMVKIERTIYDWFHFSHGHYSFSLSSPVFWIDEESKDYIVMWGLGVYCVVYAKKGDTSWNQIPQTSYFYDMVYKDHKLYFLSSTGTFQILDFSEEMDNKTSKVVCLLDRKLVVTVTGKALKVAKMWRPTYRTWSFRVFKISSSGYEKLDSLGDEALLLDLGITVLASDVEGFKRNSIYFSCRPSGGYETNASDLFLFNLETQKMELLHKFDCSSLQLYRSRWFLPSLTHT</sequence>
<proteinExistence type="predicted"/>